<accession>Q1DQ73</accession>
<accession>A0A0D6K9M9</accession>
<accession>J3K482</accession>
<protein>
    <recommendedName>
        <fullName>DNA mismatch repair protein MSH3</fullName>
    </recommendedName>
    <alternativeName>
        <fullName>MutS protein homolog 3</fullName>
    </alternativeName>
</protein>
<reference key="1">
    <citation type="journal article" date="2009" name="Genome Res.">
        <title>Comparative genomic analyses of the human fungal pathogens Coccidioides and their relatives.</title>
        <authorList>
            <person name="Sharpton T.J."/>
            <person name="Stajich J.E."/>
            <person name="Rounsley S.D."/>
            <person name="Gardner M.J."/>
            <person name="Wortman J.R."/>
            <person name="Jordar V.S."/>
            <person name="Maiti R."/>
            <person name="Kodira C.D."/>
            <person name="Neafsey D.E."/>
            <person name="Zeng Q."/>
            <person name="Hung C.-Y."/>
            <person name="McMahan C."/>
            <person name="Muszewska A."/>
            <person name="Grynberg M."/>
            <person name="Mandel M.A."/>
            <person name="Kellner E.M."/>
            <person name="Barker B.M."/>
            <person name="Galgiani J.N."/>
            <person name="Orbach M.J."/>
            <person name="Kirkland T.N."/>
            <person name="Cole G.T."/>
            <person name="Henn M.R."/>
            <person name="Birren B.W."/>
            <person name="Taylor J.W."/>
        </authorList>
    </citation>
    <scope>NUCLEOTIDE SEQUENCE [LARGE SCALE GENOMIC DNA]</scope>
    <source>
        <strain>RS</strain>
    </source>
</reference>
<reference key="2">
    <citation type="journal article" date="2010" name="Genome Res.">
        <title>Population genomic sequencing of Coccidioides fungi reveals recent hybridization and transposon control.</title>
        <authorList>
            <person name="Neafsey D.E."/>
            <person name="Barker B.M."/>
            <person name="Sharpton T.J."/>
            <person name="Stajich J.E."/>
            <person name="Park D.J."/>
            <person name="Whiston E."/>
            <person name="Hung C.-Y."/>
            <person name="McMahan C."/>
            <person name="White J."/>
            <person name="Sykes S."/>
            <person name="Heiman D."/>
            <person name="Young S."/>
            <person name="Zeng Q."/>
            <person name="Abouelleil A."/>
            <person name="Aftuck L."/>
            <person name="Bessette D."/>
            <person name="Brown A."/>
            <person name="FitzGerald M."/>
            <person name="Lui A."/>
            <person name="Macdonald J.P."/>
            <person name="Priest M."/>
            <person name="Orbach M.J."/>
            <person name="Galgiani J.N."/>
            <person name="Kirkland T.N."/>
            <person name="Cole G.T."/>
            <person name="Birren B.W."/>
            <person name="Henn M.R."/>
            <person name="Taylor J.W."/>
            <person name="Rounsley S.D."/>
        </authorList>
    </citation>
    <scope>GENOME REANNOTATION</scope>
    <source>
        <strain>RS</strain>
    </source>
</reference>
<keyword id="KW-0067">ATP-binding</keyword>
<keyword id="KW-0227">DNA damage</keyword>
<keyword id="KW-0234">DNA repair</keyword>
<keyword id="KW-0238">DNA-binding</keyword>
<keyword id="KW-0547">Nucleotide-binding</keyword>
<keyword id="KW-0539">Nucleus</keyword>
<keyword id="KW-1185">Reference proteome</keyword>
<comment type="function">
    <text evidence="1">Component of the post-replicative DNA mismatch repair system (MMR). Heterodimerizes with MSH2 to form MutS beta, which binds to DNA mismatches thereby initiating DNA repair. MSH3 provides substrate-binding and substrate specificity to the complex. When bound, the MutS beta heterodimer bends the DNA helix and shields approximately 20 base pairs. Acts mainly to repair insertion-deletion loops (IDLs) from 2 to 13 nucleotides in size, but can also repair base-base and single insertion-deletion mismatches that occur during replication. After mismatch binding, forms a ternary complex with the MutL alpha heterodimer, which is thought to be responsible for directing the downstream MMR events, including strand discrimination, excision, and resynthesis. ATP binding and hydrolysis play a pivotal role in mismatch repair functions (By similarity).</text>
</comment>
<comment type="subunit">
    <text evidence="1">Heterodimer consisting of MSH2-MSH3 (MutS beta). Forms a ternary complex with MutL alpha (MLH1-PMS1) (By similarity).</text>
</comment>
<comment type="subcellular location">
    <subcellularLocation>
        <location evidence="1">Nucleus</location>
    </subcellularLocation>
</comment>
<comment type="similarity">
    <text evidence="4">Belongs to the DNA mismatch repair MutS family. MSH3 subfamily.</text>
</comment>
<gene>
    <name type="primary">MSH3</name>
    <name type="ORF">CIMG_07540</name>
</gene>
<evidence type="ECO:0000250" key="1"/>
<evidence type="ECO:0000255" key="2"/>
<evidence type="ECO:0000256" key="3">
    <source>
        <dbReference type="SAM" id="MobiDB-lite"/>
    </source>
</evidence>
<evidence type="ECO:0000305" key="4"/>
<organism>
    <name type="scientific">Coccidioides immitis (strain RS)</name>
    <name type="common">Valley fever fungus</name>
    <dbReference type="NCBI Taxonomy" id="246410"/>
    <lineage>
        <taxon>Eukaryota</taxon>
        <taxon>Fungi</taxon>
        <taxon>Dikarya</taxon>
        <taxon>Ascomycota</taxon>
        <taxon>Pezizomycotina</taxon>
        <taxon>Eurotiomycetes</taxon>
        <taxon>Eurotiomycetidae</taxon>
        <taxon>Onygenales</taxon>
        <taxon>Onygenaceae</taxon>
        <taxon>Coccidioides</taxon>
    </lineage>
</organism>
<proteinExistence type="inferred from homology"/>
<name>MSH3_COCIM</name>
<feature type="chain" id="PRO_0000338518" description="DNA mismatch repair protein MSH3">
    <location>
        <begin position="1"/>
        <end position="1125"/>
    </location>
</feature>
<feature type="region of interest" description="Disordered" evidence="3">
    <location>
        <begin position="1"/>
        <end position="212"/>
    </location>
</feature>
<feature type="region of interest" description="Mispair-binding domain" evidence="1">
    <location>
        <begin position="208"/>
        <end position="335"/>
    </location>
</feature>
<feature type="compositionally biased region" description="Low complexity" evidence="3">
    <location>
        <begin position="16"/>
        <end position="33"/>
    </location>
</feature>
<feature type="compositionally biased region" description="Polar residues" evidence="3">
    <location>
        <begin position="101"/>
        <end position="112"/>
    </location>
</feature>
<feature type="compositionally biased region" description="Basic and acidic residues" evidence="3">
    <location>
        <begin position="135"/>
        <end position="145"/>
    </location>
</feature>
<feature type="compositionally biased region" description="Basic residues" evidence="3">
    <location>
        <begin position="146"/>
        <end position="158"/>
    </location>
</feature>
<feature type="compositionally biased region" description="Acidic residues" evidence="3">
    <location>
        <begin position="182"/>
        <end position="195"/>
    </location>
</feature>
<feature type="binding site" evidence="2">
    <location>
        <begin position="898"/>
        <end position="905"/>
    </location>
    <ligand>
        <name>ATP</name>
        <dbReference type="ChEBI" id="CHEBI:30616"/>
    </ligand>
</feature>
<sequence length="1125" mass="124644">MSQSSSLKRKQQPTISSFFGKTTSSSGESTNKKASLNGLGRAKQRIREEESNLSPSPEDKGEYLDDEDEDIVPPSRKRVKSSRISTDGANAAAKGNDDDLSQSPHRNVPASSRTERFRFQSSPVSSLDAEGSQVEGREAIDTERERKRKENLHQKFVRRLGGPGCLPSLEHGSNANTAMTEGGEDEDEALDEEDVAPPPSTKARGARKAASTKLTPLEKQVIDIKNKHKDAILVVEVGYKFRFFGEDARIAAKELSIVCIPGKLRFDEHPSEAHLNRFASASIPVHRLHVHVKRLVRAGHKVGVVRQLETAALKAAGDNRNAPFERKLTHLYTKGTYIDDTEELEGLNAVGANSAAPATGYLLCMTESNAKGWGNDEKVQVGILAVQPATGNIIHDSFEDGFMRTEIETRLLHIAPCEFLLIGDVSRATDKLVQHLSGSKMNVFGDKVRVERVSKSKTAAAESHSHVSSFYAGRMKATSTTQDERARDLLDKVLNLPEDVTICLSAMIKHLKEYNLENVFDLTKYFQPFSARSHMLLNGNTLINLEIYQNQTEQTSKGSLFWTLDRTKTRFGQRLLRKWVGRPLLDKQELEDRVAAVTELKDSDATPRVGRLKTLLSKVKTDLEKNLLRIYYGKCTRPELLTVLQTLQLIATEFSHVKSPADAGFDSPVINEAISQLPVVLDDVVSYLNKINLHSAKADDKFSFFQESEETDEITEQKLGIGSVEHDLEEYRNTAAEILCKKKVCYVTNAGIEYLIEVENSSLQMKKIPASWRKISGTKKVSRFHPPEVVNLMRERDQHKEALAAACDKAFLGLLADISTKYQPFRDCIQALATLDCFMSLAAVAAQPGYVRPTYADEARISVRGGRHPMVEQLLLDTYVPNDTELGTDGTRALLVTGPNMGGKSSYVRQVALISIMGQIGSYVPAESATLGMLDAVYTRMGAFDNMLAGESTFMVELSETSDILKQATPRSLVILDELGRGTSTHDGVAIAQAVLDYMVRDIRSLTLFITHYQHLSNLARTFPNGELRNVHMKFTESGKDGQDITFLYEVGEGVAHRSYGLNVARLANIPSSVLDVAYTKSAELEEKIKRKNLEGIAKGLSRVLENGENEGELMERLLSEVEQL</sequence>
<dbReference type="EMBL" id="GG704913">
    <property type="protein sequence ID" value="EAS28794.2"/>
    <property type="molecule type" value="Genomic_DNA"/>
</dbReference>
<dbReference type="RefSeq" id="XP_001240377.2">
    <property type="nucleotide sequence ID" value="XM_001240376.2"/>
</dbReference>
<dbReference type="SMR" id="Q1DQ73"/>
<dbReference type="FunCoup" id="Q1DQ73">
    <property type="interactions" value="755"/>
</dbReference>
<dbReference type="STRING" id="246410.Q1DQ73"/>
<dbReference type="GeneID" id="4559896"/>
<dbReference type="KEGG" id="cim:CIMG_07540"/>
<dbReference type="VEuPathDB" id="FungiDB:CIMG_07540"/>
<dbReference type="InParanoid" id="Q1DQ73"/>
<dbReference type="OMA" id="INMHAAR"/>
<dbReference type="OrthoDB" id="121051at2759"/>
<dbReference type="Proteomes" id="UP000001261">
    <property type="component" value="Unassembled WGS sequence"/>
</dbReference>
<dbReference type="GO" id="GO:0005634">
    <property type="term" value="C:nucleus"/>
    <property type="evidence" value="ECO:0007669"/>
    <property type="project" value="UniProtKB-SubCell"/>
</dbReference>
<dbReference type="GO" id="GO:0005524">
    <property type="term" value="F:ATP binding"/>
    <property type="evidence" value="ECO:0007669"/>
    <property type="project" value="UniProtKB-KW"/>
</dbReference>
<dbReference type="GO" id="GO:0140664">
    <property type="term" value="F:ATP-dependent DNA damage sensor activity"/>
    <property type="evidence" value="ECO:0007669"/>
    <property type="project" value="InterPro"/>
</dbReference>
<dbReference type="GO" id="GO:0030983">
    <property type="term" value="F:mismatched DNA binding"/>
    <property type="evidence" value="ECO:0007669"/>
    <property type="project" value="InterPro"/>
</dbReference>
<dbReference type="GO" id="GO:0006298">
    <property type="term" value="P:mismatch repair"/>
    <property type="evidence" value="ECO:0007669"/>
    <property type="project" value="InterPro"/>
</dbReference>
<dbReference type="GO" id="GO:0006312">
    <property type="term" value="P:mitotic recombination"/>
    <property type="evidence" value="ECO:0007669"/>
    <property type="project" value="TreeGrafter"/>
</dbReference>
<dbReference type="FunFam" id="3.30.420.110:FF:000008">
    <property type="entry name" value="DNA mismatch repair protein"/>
    <property type="match status" value="1"/>
</dbReference>
<dbReference type="FunFam" id="3.40.1170.10:FF:000006">
    <property type="entry name" value="DNA mismatch repair protein"/>
    <property type="match status" value="1"/>
</dbReference>
<dbReference type="FunFam" id="1.10.1420.10:FF:000004">
    <property type="entry name" value="DNA mismatch repair protein Msh3"/>
    <property type="match status" value="1"/>
</dbReference>
<dbReference type="FunFam" id="3.40.50.300:FF:001909">
    <property type="entry name" value="DNA mismatch repair protein msh3"/>
    <property type="match status" value="1"/>
</dbReference>
<dbReference type="Gene3D" id="1.10.1420.10">
    <property type="match status" value="2"/>
</dbReference>
<dbReference type="Gene3D" id="3.40.1170.10">
    <property type="entry name" value="DNA repair protein MutS, domain I"/>
    <property type="match status" value="1"/>
</dbReference>
<dbReference type="Gene3D" id="3.30.420.110">
    <property type="entry name" value="MutS, connector domain"/>
    <property type="match status" value="1"/>
</dbReference>
<dbReference type="Gene3D" id="3.40.50.300">
    <property type="entry name" value="P-loop containing nucleotide triphosphate hydrolases"/>
    <property type="match status" value="1"/>
</dbReference>
<dbReference type="InterPro" id="IPR007695">
    <property type="entry name" value="DNA_mismatch_repair_MutS-lik_N"/>
</dbReference>
<dbReference type="InterPro" id="IPR017261">
    <property type="entry name" value="DNA_mismatch_repair_MutS/MSH"/>
</dbReference>
<dbReference type="InterPro" id="IPR000432">
    <property type="entry name" value="DNA_mismatch_repair_MutS_C"/>
</dbReference>
<dbReference type="InterPro" id="IPR007696">
    <property type="entry name" value="DNA_mismatch_repair_MutS_core"/>
</dbReference>
<dbReference type="InterPro" id="IPR016151">
    <property type="entry name" value="DNA_mismatch_repair_MutS_N"/>
</dbReference>
<dbReference type="InterPro" id="IPR036187">
    <property type="entry name" value="DNA_mismatch_repair_MutS_sf"/>
</dbReference>
<dbReference type="InterPro" id="IPR045076">
    <property type="entry name" value="MutS"/>
</dbReference>
<dbReference type="InterPro" id="IPR036678">
    <property type="entry name" value="MutS_con_dom_sf"/>
</dbReference>
<dbReference type="InterPro" id="IPR027417">
    <property type="entry name" value="P-loop_NTPase"/>
</dbReference>
<dbReference type="NCBIfam" id="NF003810">
    <property type="entry name" value="PRK05399.1"/>
    <property type="match status" value="1"/>
</dbReference>
<dbReference type="PANTHER" id="PTHR11361:SF122">
    <property type="entry name" value="DNA MISMATCH REPAIR PROTEIN MSH3"/>
    <property type="match status" value="1"/>
</dbReference>
<dbReference type="PANTHER" id="PTHR11361">
    <property type="entry name" value="DNA MISMATCH REPAIR PROTEIN MUTS FAMILY MEMBER"/>
    <property type="match status" value="1"/>
</dbReference>
<dbReference type="Pfam" id="PF01624">
    <property type="entry name" value="MutS_I"/>
    <property type="match status" value="1"/>
</dbReference>
<dbReference type="Pfam" id="PF05192">
    <property type="entry name" value="MutS_III"/>
    <property type="match status" value="1"/>
</dbReference>
<dbReference type="Pfam" id="PF00488">
    <property type="entry name" value="MutS_V"/>
    <property type="match status" value="1"/>
</dbReference>
<dbReference type="PIRSF" id="PIRSF037677">
    <property type="entry name" value="DNA_mis_repair_Msh6"/>
    <property type="match status" value="1"/>
</dbReference>
<dbReference type="SMART" id="SM00534">
    <property type="entry name" value="MUTSac"/>
    <property type="match status" value="1"/>
</dbReference>
<dbReference type="SMART" id="SM00533">
    <property type="entry name" value="MUTSd"/>
    <property type="match status" value="1"/>
</dbReference>
<dbReference type="SUPFAM" id="SSF55271">
    <property type="entry name" value="DNA repair protein MutS, domain I"/>
    <property type="match status" value="1"/>
</dbReference>
<dbReference type="SUPFAM" id="SSF48334">
    <property type="entry name" value="DNA repair protein MutS, domain III"/>
    <property type="match status" value="1"/>
</dbReference>
<dbReference type="SUPFAM" id="SSF52540">
    <property type="entry name" value="P-loop containing nucleoside triphosphate hydrolases"/>
    <property type="match status" value="1"/>
</dbReference>
<dbReference type="PROSITE" id="PS00486">
    <property type="entry name" value="DNA_MISMATCH_REPAIR_2"/>
    <property type="match status" value="1"/>
</dbReference>